<evidence type="ECO:0000255" key="1"/>
<evidence type="ECO:0000256" key="2">
    <source>
        <dbReference type="SAM" id="MobiDB-lite"/>
    </source>
</evidence>
<evidence type="ECO:0000269" key="3">
    <source>
    </source>
</evidence>
<evidence type="ECO:0000269" key="4">
    <source>
    </source>
</evidence>
<evidence type="ECO:0000305" key="5"/>
<feature type="chain" id="PRO_0000054169" description="Thiamine transporter thi9">
    <location>
        <begin position="1"/>
        <end position="591"/>
    </location>
</feature>
<feature type="transmembrane region" description="Helical" evidence="1">
    <location>
        <begin position="98"/>
        <end position="118"/>
    </location>
</feature>
<feature type="transmembrane region" description="Helical" evidence="1">
    <location>
        <begin position="342"/>
        <end position="362"/>
    </location>
</feature>
<feature type="transmembrane region" description="Helical" evidence="1">
    <location>
        <begin position="397"/>
        <end position="417"/>
    </location>
</feature>
<feature type="transmembrane region" description="Helical" evidence="1">
    <location>
        <begin position="450"/>
        <end position="470"/>
    </location>
</feature>
<feature type="transmembrane region" description="Helical" evidence="1">
    <location>
        <begin position="545"/>
        <end position="565"/>
    </location>
</feature>
<feature type="region of interest" description="Disordered" evidence="2">
    <location>
        <begin position="1"/>
        <end position="42"/>
    </location>
</feature>
<feature type="compositionally biased region" description="Polar residues" evidence="2">
    <location>
        <begin position="1"/>
        <end position="22"/>
    </location>
</feature>
<feature type="modified residue" description="Phosphoserine" evidence="4">
    <location>
        <position position="585"/>
    </location>
</feature>
<feature type="mutagenesis site" description="Accumulates in the endoplasmic reticulum and punctuate cytoplasmic structures." evidence="3">
    <original>E</original>
    <variation>K</variation>
    <location>
        <position position="81"/>
    </location>
</feature>
<reference key="1">
    <citation type="journal article" date="2002" name="Nature">
        <title>The genome sequence of Schizosaccharomyces pombe.</title>
        <authorList>
            <person name="Wood V."/>
            <person name="Gwilliam R."/>
            <person name="Rajandream M.A."/>
            <person name="Lyne M.H."/>
            <person name="Lyne R."/>
            <person name="Stewart A."/>
            <person name="Sgouros J.G."/>
            <person name="Peat N."/>
            <person name="Hayles J."/>
            <person name="Baker S.G."/>
            <person name="Basham D."/>
            <person name="Bowman S."/>
            <person name="Brooks K."/>
            <person name="Brown D."/>
            <person name="Brown S."/>
            <person name="Chillingworth T."/>
            <person name="Churcher C.M."/>
            <person name="Collins M."/>
            <person name="Connor R."/>
            <person name="Cronin A."/>
            <person name="Davis P."/>
            <person name="Feltwell T."/>
            <person name="Fraser A."/>
            <person name="Gentles S."/>
            <person name="Goble A."/>
            <person name="Hamlin N."/>
            <person name="Harris D.E."/>
            <person name="Hidalgo J."/>
            <person name="Hodgson G."/>
            <person name="Holroyd S."/>
            <person name="Hornsby T."/>
            <person name="Howarth S."/>
            <person name="Huckle E.J."/>
            <person name="Hunt S."/>
            <person name="Jagels K."/>
            <person name="James K.D."/>
            <person name="Jones L."/>
            <person name="Jones M."/>
            <person name="Leather S."/>
            <person name="McDonald S."/>
            <person name="McLean J."/>
            <person name="Mooney P."/>
            <person name="Moule S."/>
            <person name="Mungall K.L."/>
            <person name="Murphy L.D."/>
            <person name="Niblett D."/>
            <person name="Odell C."/>
            <person name="Oliver K."/>
            <person name="O'Neil S."/>
            <person name="Pearson D."/>
            <person name="Quail M.A."/>
            <person name="Rabbinowitsch E."/>
            <person name="Rutherford K.M."/>
            <person name="Rutter S."/>
            <person name="Saunders D."/>
            <person name="Seeger K."/>
            <person name="Sharp S."/>
            <person name="Skelton J."/>
            <person name="Simmonds M.N."/>
            <person name="Squares R."/>
            <person name="Squares S."/>
            <person name="Stevens K."/>
            <person name="Taylor K."/>
            <person name="Taylor R.G."/>
            <person name="Tivey A."/>
            <person name="Walsh S.V."/>
            <person name="Warren T."/>
            <person name="Whitehead S."/>
            <person name="Woodward J.R."/>
            <person name="Volckaert G."/>
            <person name="Aert R."/>
            <person name="Robben J."/>
            <person name="Grymonprez B."/>
            <person name="Weltjens I."/>
            <person name="Vanstreels E."/>
            <person name="Rieger M."/>
            <person name="Schaefer M."/>
            <person name="Mueller-Auer S."/>
            <person name="Gabel C."/>
            <person name="Fuchs M."/>
            <person name="Duesterhoeft A."/>
            <person name="Fritzc C."/>
            <person name="Holzer E."/>
            <person name="Moestl D."/>
            <person name="Hilbert H."/>
            <person name="Borzym K."/>
            <person name="Langer I."/>
            <person name="Beck A."/>
            <person name="Lehrach H."/>
            <person name="Reinhardt R."/>
            <person name="Pohl T.M."/>
            <person name="Eger P."/>
            <person name="Zimmermann W."/>
            <person name="Wedler H."/>
            <person name="Wambutt R."/>
            <person name="Purnelle B."/>
            <person name="Goffeau A."/>
            <person name="Cadieu E."/>
            <person name="Dreano S."/>
            <person name="Gloux S."/>
            <person name="Lelaure V."/>
            <person name="Mottier S."/>
            <person name="Galibert F."/>
            <person name="Aves S.J."/>
            <person name="Xiang Z."/>
            <person name="Hunt C."/>
            <person name="Moore K."/>
            <person name="Hurst S.M."/>
            <person name="Lucas M."/>
            <person name="Rochet M."/>
            <person name="Gaillardin C."/>
            <person name="Tallada V.A."/>
            <person name="Garzon A."/>
            <person name="Thode G."/>
            <person name="Daga R.R."/>
            <person name="Cruzado L."/>
            <person name="Jimenez J."/>
            <person name="Sanchez M."/>
            <person name="del Rey F."/>
            <person name="Benito J."/>
            <person name="Dominguez A."/>
            <person name="Revuelta J.L."/>
            <person name="Moreno S."/>
            <person name="Armstrong J."/>
            <person name="Forsburg S.L."/>
            <person name="Cerutti L."/>
            <person name="Lowe T."/>
            <person name="McCombie W.R."/>
            <person name="Paulsen I."/>
            <person name="Potashkin J."/>
            <person name="Shpakovski G.V."/>
            <person name="Ussery D."/>
            <person name="Barrell B.G."/>
            <person name="Nurse P."/>
        </authorList>
    </citation>
    <scope>NUCLEOTIDE SEQUENCE [LARGE SCALE GENOMIC DNA]</scope>
    <source>
        <strain>972 / ATCC 24843</strain>
    </source>
</reference>
<reference key="2">
    <citation type="journal article" date="2006" name="Nat. Biotechnol.">
        <title>ORFeome cloning and global analysis of protein localization in the fission yeast Schizosaccharomyces pombe.</title>
        <authorList>
            <person name="Matsuyama A."/>
            <person name="Arai R."/>
            <person name="Yashiroda Y."/>
            <person name="Shirai A."/>
            <person name="Kamata A."/>
            <person name="Sekido S."/>
            <person name="Kobayashi Y."/>
            <person name="Hashimoto A."/>
            <person name="Hamamoto M."/>
            <person name="Hiraoka Y."/>
            <person name="Horinouchi S."/>
            <person name="Yoshida M."/>
        </authorList>
    </citation>
    <scope>SUBCELLULAR LOCATION [LARGE SCALE ANALYSIS]</scope>
</reference>
<reference key="3">
    <citation type="journal article" date="2008" name="J. Biol. Chem.">
        <title>Characterization of Thi9, a novel thiamine (Vitamin B1) transporter from Schizosaccharomyces pombe.</title>
        <authorList>
            <person name="Vogl C."/>
            <person name="Klein C.M."/>
            <person name="Batke A.F."/>
            <person name="Schweingruber M.E."/>
            <person name="Stolz J."/>
        </authorList>
    </citation>
    <scope>FUNCTION</scope>
    <scope>SUBCELLULAR LOCATION</scope>
    <scope>MUTAGENESIS OF GLU-81</scope>
    <scope>BIOPHYSICOCHEMICAL PROPERTIES</scope>
</reference>
<reference key="4">
    <citation type="journal article" date="2008" name="J. Proteome Res.">
        <title>Phosphoproteome analysis of fission yeast.</title>
        <authorList>
            <person name="Wilson-Grady J.T."/>
            <person name="Villen J."/>
            <person name="Gygi S.P."/>
        </authorList>
    </citation>
    <scope>PHOSPHORYLATION [LARGE SCALE ANALYSIS] AT SER-585</scope>
    <scope>IDENTIFICATION BY MASS SPECTROMETRY</scope>
</reference>
<gene>
    <name type="primary">thi9</name>
    <name type="ORF">SPAC9.10</name>
</gene>
<proteinExistence type="evidence at protein level"/>
<comment type="function">
    <text evidence="3">Thiamine transporter involved in the cellular uptake of thiamine. Pyrithiamine, oxythiamine, amprolium, and the thiazole part of thiamine have been shown to be also substrates of thi9.</text>
</comment>
<comment type="biophysicochemical properties">
    <kinetics>
        <KM evidence="3">0.4 uM for thiamine</KM>
    </kinetics>
</comment>
<comment type="subcellular location">
    <subcellularLocation>
        <location>Endoplasmic reticulum membrane</location>
        <topology>Multi-pass membrane protein</topology>
    </subcellularLocation>
    <subcellularLocation>
        <location>Cell membrane</location>
        <topology>Multi-pass membrane protein</topology>
    </subcellularLocation>
</comment>
<comment type="similarity">
    <text evidence="5">Belongs to the amino acid-polyamine-organocation (APC) superfamily.</text>
</comment>
<keyword id="KW-0029">Amino-acid transport</keyword>
<keyword id="KW-1003">Cell membrane</keyword>
<keyword id="KW-0256">Endoplasmic reticulum</keyword>
<keyword id="KW-0472">Membrane</keyword>
<keyword id="KW-0597">Phosphoprotein</keyword>
<keyword id="KW-1185">Reference proteome</keyword>
<keyword id="KW-0812">Transmembrane</keyword>
<keyword id="KW-1133">Transmembrane helix</keyword>
<keyword id="KW-0813">Transport</keyword>
<protein>
    <recommendedName>
        <fullName>Thiamine transporter thi9</fullName>
    </recommendedName>
</protein>
<name>THI9_SCHPO</name>
<accession>Q9UT18</accession>
<organism>
    <name type="scientific">Schizosaccharomyces pombe (strain 972 / ATCC 24843)</name>
    <name type="common">Fission yeast</name>
    <dbReference type="NCBI Taxonomy" id="284812"/>
    <lineage>
        <taxon>Eukaryota</taxon>
        <taxon>Fungi</taxon>
        <taxon>Dikarya</taxon>
        <taxon>Ascomycota</taxon>
        <taxon>Taphrinomycotina</taxon>
        <taxon>Schizosaccharomycetes</taxon>
        <taxon>Schizosaccharomycetales</taxon>
        <taxon>Schizosaccharomycetaceae</taxon>
        <taxon>Schizosaccharomyces</taxon>
    </lineage>
</organism>
<dbReference type="EMBL" id="CU329670">
    <property type="protein sequence ID" value="CAB57428.1"/>
    <property type="molecule type" value="Genomic_DNA"/>
</dbReference>
<dbReference type="PIR" id="T39195">
    <property type="entry name" value="T39195"/>
</dbReference>
<dbReference type="RefSeq" id="NP_593353.1">
    <property type="nucleotide sequence ID" value="NM_001018785.2"/>
</dbReference>
<dbReference type="SMR" id="Q9UT18"/>
<dbReference type="BioGRID" id="279993">
    <property type="interactions" value="14"/>
</dbReference>
<dbReference type="STRING" id="284812.Q9UT18"/>
<dbReference type="TCDB" id="2.A.3.4.6">
    <property type="family name" value="the amino acid-polyamine-organocation (apc) family"/>
</dbReference>
<dbReference type="iPTMnet" id="Q9UT18"/>
<dbReference type="PaxDb" id="4896-SPAC9.10.1"/>
<dbReference type="EnsemblFungi" id="SPAC9.10.1">
    <property type="protein sequence ID" value="SPAC9.10.1:pep"/>
    <property type="gene ID" value="SPAC9.10"/>
</dbReference>
<dbReference type="GeneID" id="2543578"/>
<dbReference type="KEGG" id="spo:2543578"/>
<dbReference type="PomBase" id="SPAC9.10">
    <property type="gene designation" value="thi9"/>
</dbReference>
<dbReference type="VEuPathDB" id="FungiDB:SPAC9.10"/>
<dbReference type="eggNOG" id="KOG1289">
    <property type="taxonomic scope" value="Eukaryota"/>
</dbReference>
<dbReference type="HOGENOM" id="CLU_004495_7_1_1"/>
<dbReference type="InParanoid" id="Q9UT18"/>
<dbReference type="OMA" id="AFMSTYN"/>
<dbReference type="PhylomeDB" id="Q9UT18"/>
<dbReference type="PRO" id="PR:Q9UT18"/>
<dbReference type="Proteomes" id="UP000002485">
    <property type="component" value="Chromosome I"/>
</dbReference>
<dbReference type="GO" id="GO:0005783">
    <property type="term" value="C:endoplasmic reticulum"/>
    <property type="evidence" value="ECO:0007005"/>
    <property type="project" value="PomBase"/>
</dbReference>
<dbReference type="GO" id="GO:0005789">
    <property type="term" value="C:endoplasmic reticulum membrane"/>
    <property type="evidence" value="ECO:0007669"/>
    <property type="project" value="UniProtKB-SubCell"/>
</dbReference>
<dbReference type="GO" id="GO:0032178">
    <property type="term" value="C:medial membrane band"/>
    <property type="evidence" value="ECO:0000314"/>
    <property type="project" value="PomBase"/>
</dbReference>
<dbReference type="GO" id="GO:0005886">
    <property type="term" value="C:plasma membrane"/>
    <property type="evidence" value="ECO:0000314"/>
    <property type="project" value="PomBase"/>
</dbReference>
<dbReference type="GO" id="GO:0031520">
    <property type="term" value="C:plasma membrane of cell tip"/>
    <property type="evidence" value="ECO:0000314"/>
    <property type="project" value="PomBase"/>
</dbReference>
<dbReference type="GO" id="GO:0015185">
    <property type="term" value="F:gamma-aminobutyric acid transmembrane transporter activity"/>
    <property type="evidence" value="ECO:0000318"/>
    <property type="project" value="GO_Central"/>
</dbReference>
<dbReference type="GO" id="GO:0034216">
    <property type="term" value="F:high-affinity thiamine:proton symporter activity"/>
    <property type="evidence" value="ECO:0000314"/>
    <property type="project" value="PomBase"/>
</dbReference>
<dbReference type="GO" id="GO:0015812">
    <property type="term" value="P:gamma-aminobutyric acid transport"/>
    <property type="evidence" value="ECO:0000318"/>
    <property type="project" value="GO_Central"/>
</dbReference>
<dbReference type="GO" id="GO:0140125">
    <property type="term" value="P:thiamine import across plasma membrane"/>
    <property type="evidence" value="ECO:0000315"/>
    <property type="project" value="PomBase"/>
</dbReference>
<dbReference type="FunFam" id="1.20.1740.10:FF:000046">
    <property type="entry name" value="Amino-acid permease, putative"/>
    <property type="match status" value="1"/>
</dbReference>
<dbReference type="Gene3D" id="1.20.1740.10">
    <property type="entry name" value="Amino acid/polyamine transporter I"/>
    <property type="match status" value="1"/>
</dbReference>
<dbReference type="InterPro" id="IPR002293">
    <property type="entry name" value="AA/rel_permease1"/>
</dbReference>
<dbReference type="PANTHER" id="PTHR45649">
    <property type="entry name" value="AMINO-ACID PERMEASE BAT1"/>
    <property type="match status" value="1"/>
</dbReference>
<dbReference type="PANTHER" id="PTHR45649:SF13">
    <property type="entry name" value="THIAMINE TRANSPORTER THI9"/>
    <property type="match status" value="1"/>
</dbReference>
<dbReference type="Pfam" id="PF13520">
    <property type="entry name" value="AA_permease_2"/>
    <property type="match status" value="1"/>
</dbReference>
<dbReference type="PIRSF" id="PIRSF006060">
    <property type="entry name" value="AA_transporter"/>
    <property type="match status" value="1"/>
</dbReference>
<sequence length="591" mass="65070">MPSSQISHQDPELGQTSSGSSSIKEKAEPQLYAGPIDPARRPDVFQEGFEDVSVTDDDNDNELLRKMGYQPVLHRSFEFFESFAASFASLDVVSGVRLTFSWGISFGGPAAYWSAMLVTGFCSIVTAACLAEICSALPAAGSIYLWAAESAGPRFGRFVSFLVAWWSTTAWTTFVASITQSTANFIFAEVSTFNNPWPTNDSDVKFRAVQWIVAEVLLVFTILLNQVPPRYYKWIFKASMLLMFIDYVMNIIWVPVATSKKPDGFRSAKWVFTETIYDQAGYIKEVDDANGNPIASLSKIVPKGWQWCLSYFATAGVIVGYDASGHIAEETKDASIKAARGIFYSTVTSFIVAFSLAILYLFCCPDLDTFTAILYNDNSPQPFVNFYSYLLGRGGHVVMNVVIILEIFLNGVVSVLACSRLVFAVSRDGVLPFSNWISQVSKTGQPKNAITVIYIVSALLLCTILPSAVAFTSLVSAAGAPSFAAYAVLAFCRLFITRDKFPKGRWSLGWLSKPCLVITLVYNLFALVVNVSPYTYPVTGPSFNYAVVIMGGVSIFAIICTIVIPKSRWVANRYRYESDSEHSASVKELKV</sequence>